<protein>
    <recommendedName>
        <fullName evidence="1">Chromosomal replication initiator protein DnaA</fullName>
    </recommendedName>
</protein>
<name>DNAA_MESFL</name>
<keyword id="KW-0067">ATP-binding</keyword>
<keyword id="KW-0963">Cytoplasm</keyword>
<keyword id="KW-0235">DNA replication</keyword>
<keyword id="KW-0238">DNA-binding</keyword>
<keyword id="KW-0446">Lipid-binding</keyword>
<keyword id="KW-0547">Nucleotide-binding</keyword>
<keyword id="KW-1185">Reference proteome</keyword>
<sequence length="443" mass="50263">METKALWEKLINKLKKEKLIDQDIIEEYIVTSELIKISNTEFVILVRSNLGVTILNEFKEVFVYEFKSVLNSYVSVDFLTKEIFEKNTKKENKKEPINTVLSENALTFENFIVGSSNKQANLAAKNVVANPGMSFNPLFIYGDSGLGKTHLLQAIKNQAELNGKKVLYLTSEEFTKRIVNALNKGDLSEIEELKTEINSNEFFILDDVQFLSKKDKTNEFFFNIINNFTENGKQLVFSSDKTPELLNGFDKRMITRFNSGLSTPINALDIPTAKLIIEAEIKKQGLKQKIKEDAVVYLAQNFSDDVRKIKGLVNRLLFFGIQNDLGHIIDLEDVIDLFKDTPSANLGLLNVKKIKEVVAKKYDVTIKAIDGKARTTAIKNARHLSMYFAKIILNHTSTQIGAEFGGRDHSTVLSAISRIEKLIYKEKEFKKIVESLKNEIIGK</sequence>
<accession>Q6F2A9</accession>
<dbReference type="EMBL" id="AE017263">
    <property type="protein sequence ID" value="AAT75357.1"/>
    <property type="molecule type" value="Genomic_DNA"/>
</dbReference>
<dbReference type="RefSeq" id="WP_011182898.1">
    <property type="nucleotide sequence ID" value="NC_006055.1"/>
</dbReference>
<dbReference type="RefSeq" id="YP_053241.1">
    <property type="nucleotide sequence ID" value="NC_006055.1"/>
</dbReference>
<dbReference type="SMR" id="Q6F2A9"/>
<dbReference type="STRING" id="265311.Mfl001"/>
<dbReference type="PaxDb" id="265311-Mfl001"/>
<dbReference type="EnsemblBacteria" id="AAT75357">
    <property type="protein sequence ID" value="AAT75357"/>
    <property type="gene ID" value="Mfl001"/>
</dbReference>
<dbReference type="GeneID" id="2897662"/>
<dbReference type="KEGG" id="mfl:Mfl001"/>
<dbReference type="PATRIC" id="fig|265311.5.peg.1"/>
<dbReference type="eggNOG" id="COG0593">
    <property type="taxonomic scope" value="Bacteria"/>
</dbReference>
<dbReference type="HOGENOM" id="CLU_026910_3_2_14"/>
<dbReference type="OrthoDB" id="9807019at2"/>
<dbReference type="Proteomes" id="UP000006647">
    <property type="component" value="Chromosome"/>
</dbReference>
<dbReference type="GO" id="GO:0005737">
    <property type="term" value="C:cytoplasm"/>
    <property type="evidence" value="ECO:0007669"/>
    <property type="project" value="UniProtKB-SubCell"/>
</dbReference>
<dbReference type="GO" id="GO:0005886">
    <property type="term" value="C:plasma membrane"/>
    <property type="evidence" value="ECO:0007669"/>
    <property type="project" value="TreeGrafter"/>
</dbReference>
<dbReference type="GO" id="GO:0005524">
    <property type="term" value="F:ATP binding"/>
    <property type="evidence" value="ECO:0007669"/>
    <property type="project" value="UniProtKB-UniRule"/>
</dbReference>
<dbReference type="GO" id="GO:0016887">
    <property type="term" value="F:ATP hydrolysis activity"/>
    <property type="evidence" value="ECO:0007669"/>
    <property type="project" value="InterPro"/>
</dbReference>
<dbReference type="GO" id="GO:0003688">
    <property type="term" value="F:DNA replication origin binding"/>
    <property type="evidence" value="ECO:0007669"/>
    <property type="project" value="UniProtKB-UniRule"/>
</dbReference>
<dbReference type="GO" id="GO:0008289">
    <property type="term" value="F:lipid binding"/>
    <property type="evidence" value="ECO:0007669"/>
    <property type="project" value="UniProtKB-KW"/>
</dbReference>
<dbReference type="GO" id="GO:0006270">
    <property type="term" value="P:DNA replication initiation"/>
    <property type="evidence" value="ECO:0007669"/>
    <property type="project" value="UniProtKB-UniRule"/>
</dbReference>
<dbReference type="GO" id="GO:0006275">
    <property type="term" value="P:regulation of DNA replication"/>
    <property type="evidence" value="ECO:0007669"/>
    <property type="project" value="UniProtKB-UniRule"/>
</dbReference>
<dbReference type="CDD" id="cd00009">
    <property type="entry name" value="AAA"/>
    <property type="match status" value="1"/>
</dbReference>
<dbReference type="CDD" id="cd06571">
    <property type="entry name" value="Bac_DnaA_C"/>
    <property type="match status" value="1"/>
</dbReference>
<dbReference type="Gene3D" id="1.10.1750.10">
    <property type="match status" value="1"/>
</dbReference>
<dbReference type="Gene3D" id="1.10.8.60">
    <property type="match status" value="1"/>
</dbReference>
<dbReference type="Gene3D" id="3.40.50.300">
    <property type="entry name" value="P-loop containing nucleotide triphosphate hydrolases"/>
    <property type="match status" value="1"/>
</dbReference>
<dbReference type="HAMAP" id="MF_00377">
    <property type="entry name" value="DnaA_bact"/>
    <property type="match status" value="1"/>
</dbReference>
<dbReference type="InterPro" id="IPR003593">
    <property type="entry name" value="AAA+_ATPase"/>
</dbReference>
<dbReference type="InterPro" id="IPR001957">
    <property type="entry name" value="Chromosome_initiator_DnaA"/>
</dbReference>
<dbReference type="InterPro" id="IPR020591">
    <property type="entry name" value="Chromosome_initiator_DnaA-like"/>
</dbReference>
<dbReference type="InterPro" id="IPR018312">
    <property type="entry name" value="Chromosome_initiator_DnaA_CS"/>
</dbReference>
<dbReference type="InterPro" id="IPR013159">
    <property type="entry name" value="DnaA_C"/>
</dbReference>
<dbReference type="InterPro" id="IPR013317">
    <property type="entry name" value="DnaA_dom"/>
</dbReference>
<dbReference type="InterPro" id="IPR027417">
    <property type="entry name" value="P-loop_NTPase"/>
</dbReference>
<dbReference type="InterPro" id="IPR010921">
    <property type="entry name" value="Trp_repressor/repl_initiator"/>
</dbReference>
<dbReference type="NCBIfam" id="TIGR00362">
    <property type="entry name" value="DnaA"/>
    <property type="match status" value="1"/>
</dbReference>
<dbReference type="PANTHER" id="PTHR30050">
    <property type="entry name" value="CHROMOSOMAL REPLICATION INITIATOR PROTEIN DNAA"/>
    <property type="match status" value="1"/>
</dbReference>
<dbReference type="PANTHER" id="PTHR30050:SF2">
    <property type="entry name" value="CHROMOSOMAL REPLICATION INITIATOR PROTEIN DNAA"/>
    <property type="match status" value="1"/>
</dbReference>
<dbReference type="Pfam" id="PF00308">
    <property type="entry name" value="Bac_DnaA"/>
    <property type="match status" value="1"/>
</dbReference>
<dbReference type="Pfam" id="PF08299">
    <property type="entry name" value="Bac_DnaA_C"/>
    <property type="match status" value="1"/>
</dbReference>
<dbReference type="PRINTS" id="PR00051">
    <property type="entry name" value="DNAA"/>
</dbReference>
<dbReference type="SMART" id="SM00382">
    <property type="entry name" value="AAA"/>
    <property type="match status" value="1"/>
</dbReference>
<dbReference type="SMART" id="SM00760">
    <property type="entry name" value="Bac_DnaA_C"/>
    <property type="match status" value="1"/>
</dbReference>
<dbReference type="SUPFAM" id="SSF52540">
    <property type="entry name" value="P-loop containing nucleoside triphosphate hydrolases"/>
    <property type="match status" value="1"/>
</dbReference>
<dbReference type="SUPFAM" id="SSF48295">
    <property type="entry name" value="TrpR-like"/>
    <property type="match status" value="1"/>
</dbReference>
<dbReference type="PROSITE" id="PS01008">
    <property type="entry name" value="DNAA"/>
    <property type="match status" value="1"/>
</dbReference>
<reference key="1">
    <citation type="submission" date="2004-06" db="EMBL/GenBank/DDBJ databases">
        <authorList>
            <person name="Birren B.W."/>
            <person name="Stange-Thomann N."/>
            <person name="Hafez N."/>
            <person name="DeCaprio D."/>
            <person name="Fisher S."/>
            <person name="Butler J."/>
            <person name="Elkins T."/>
            <person name="Kodira C.D."/>
            <person name="Major J."/>
            <person name="Wang S."/>
            <person name="Nicol R."/>
            <person name="Nusbaum C."/>
        </authorList>
    </citation>
    <scope>NUCLEOTIDE SEQUENCE [LARGE SCALE GENOMIC DNA]</scope>
    <source>
        <strain>ATCC 33453 / NBRC 100688 / NCTC 11704 / L1</strain>
    </source>
</reference>
<feature type="chain" id="PRO_0000114205" description="Chromosomal replication initiator protein DnaA">
    <location>
        <begin position="1"/>
        <end position="443"/>
    </location>
</feature>
<feature type="region of interest" description="Domain I, interacts with DnaA modulators" evidence="1">
    <location>
        <begin position="1"/>
        <end position="76"/>
    </location>
</feature>
<feature type="region of interest" description="Domain II" evidence="1">
    <location>
        <begin position="76"/>
        <end position="99"/>
    </location>
</feature>
<feature type="region of interest" description="Domain III, AAA+ region" evidence="1">
    <location>
        <begin position="100"/>
        <end position="320"/>
    </location>
</feature>
<feature type="region of interest" description="Domain IV, binds dsDNA" evidence="1">
    <location>
        <begin position="321"/>
        <end position="443"/>
    </location>
</feature>
<feature type="binding site" evidence="1">
    <location>
        <position position="145"/>
    </location>
    <ligand>
        <name>ATP</name>
        <dbReference type="ChEBI" id="CHEBI:30616"/>
    </ligand>
</feature>
<feature type="binding site" evidence="1">
    <location>
        <position position="147"/>
    </location>
    <ligand>
        <name>ATP</name>
        <dbReference type="ChEBI" id="CHEBI:30616"/>
    </ligand>
</feature>
<feature type="binding site" evidence="1">
    <location>
        <position position="148"/>
    </location>
    <ligand>
        <name>ATP</name>
        <dbReference type="ChEBI" id="CHEBI:30616"/>
    </ligand>
</feature>
<feature type="binding site" evidence="1">
    <location>
        <position position="149"/>
    </location>
    <ligand>
        <name>ATP</name>
        <dbReference type="ChEBI" id="CHEBI:30616"/>
    </ligand>
</feature>
<evidence type="ECO:0000255" key="1">
    <source>
        <dbReference type="HAMAP-Rule" id="MF_00377"/>
    </source>
</evidence>
<proteinExistence type="inferred from homology"/>
<organism>
    <name type="scientific">Mesoplasma florum (strain ATCC 33453 / NBRC 100688 / NCTC 11704 / L1)</name>
    <name type="common">Acholeplasma florum</name>
    <dbReference type="NCBI Taxonomy" id="265311"/>
    <lineage>
        <taxon>Bacteria</taxon>
        <taxon>Bacillati</taxon>
        <taxon>Mycoplasmatota</taxon>
        <taxon>Mollicutes</taxon>
        <taxon>Entomoplasmatales</taxon>
        <taxon>Entomoplasmataceae</taxon>
        <taxon>Mesoplasma</taxon>
    </lineage>
</organism>
<comment type="function">
    <text evidence="1">Plays an essential role in the initiation and regulation of chromosomal replication. ATP-DnaA binds to the origin of replication (oriC) to initiate formation of the DNA replication initiation complex once per cell cycle. Binds the DnaA box (a 9 base pair repeat at the origin) and separates the double-stranded (ds)DNA. Forms a right-handed helical filament on oriC DNA; dsDNA binds to the exterior of the filament while single-stranded (ss)DNA is stabiized in the filament's interior. The ATP-DnaA-oriC complex binds and stabilizes one strand of the AT-rich DNA unwinding element (DUE), permitting loading of DNA polymerase. After initiation quickly degrades to an ADP-DnaA complex that is not apt for DNA replication. Binds acidic phospholipids.</text>
</comment>
<comment type="subunit">
    <text evidence="1">Oligomerizes as a right-handed, spiral filament on DNA at oriC.</text>
</comment>
<comment type="subcellular location">
    <subcellularLocation>
        <location evidence="1">Cytoplasm</location>
    </subcellularLocation>
</comment>
<comment type="domain">
    <text evidence="1">Domain I is involved in oligomerization and binding regulators, domain II is flexibile and of varying length in different bacteria, domain III forms the AAA+ region, while domain IV binds dsDNA.</text>
</comment>
<comment type="similarity">
    <text evidence="1">Belongs to the DnaA family.</text>
</comment>
<gene>
    <name evidence="1" type="primary">dnaA</name>
    <name type="ordered locus">Mfl001</name>
</gene>